<proteinExistence type="evidence at protein level"/>
<feature type="chain" id="PRO_0000175566" description="Flavin-dependent thymidylate synthase">
    <location>
        <begin position="1"/>
        <end position="208"/>
    </location>
</feature>
<feature type="domain" description="ThyX" evidence="2">
    <location>
        <begin position="1"/>
        <end position="208"/>
    </location>
</feature>
<feature type="short sequence motif" description="ThyX motif" evidence="7">
    <location>
        <begin position="74"/>
        <end position="84"/>
    </location>
</feature>
<feature type="active site" description="Involved in ionization of N3 of dUMP, leading to its activation" evidence="1">
    <location>
        <position position="174"/>
    </location>
</feature>
<feature type="binding site" evidence="4 8">
    <location>
        <position position="50"/>
    </location>
    <ligand>
        <name>FAD</name>
        <dbReference type="ChEBI" id="CHEBI:57692"/>
        <note>ligand shared between neighboring subunits</note>
    </ligand>
</feature>
<feature type="binding site" evidence="4 8">
    <location>
        <begin position="71"/>
        <end position="74"/>
    </location>
    <ligand>
        <name>dUMP</name>
        <dbReference type="ChEBI" id="CHEBI:246422"/>
        <note>ligand shared between dimeric partners</note>
    </ligand>
</feature>
<feature type="binding site" evidence="4 8">
    <location>
        <begin position="74"/>
        <end position="76"/>
    </location>
    <ligand>
        <name>FAD</name>
        <dbReference type="ChEBI" id="CHEBI:57692"/>
        <note>ligand shared between neighboring subunits</note>
    </ligand>
</feature>
<feature type="binding site" description="in other chain" evidence="4 8">
    <location>
        <begin position="84"/>
        <end position="86"/>
    </location>
    <ligand>
        <name>dUMP</name>
        <dbReference type="ChEBI" id="CHEBI:246422"/>
        <note>ligand shared between dimeric partners</note>
    </ligand>
</feature>
<feature type="binding site" description="in other chain" evidence="4">
    <location>
        <position position="147"/>
    </location>
    <ligand>
        <name>dUMP</name>
        <dbReference type="ChEBI" id="CHEBI:246422"/>
        <note>ligand shared between dimeric partners</note>
    </ligand>
</feature>
<feature type="binding site" evidence="4 8">
    <location>
        <begin position="163"/>
        <end position="165"/>
    </location>
    <ligand>
        <name>FAD</name>
        <dbReference type="ChEBI" id="CHEBI:57692"/>
        <note>ligand shared between neighboring subunits</note>
    </ligand>
</feature>
<feature type="binding site" evidence="4 8">
    <location>
        <position position="169"/>
    </location>
    <ligand>
        <name>FAD</name>
        <dbReference type="ChEBI" id="CHEBI:57692"/>
        <note>ligand shared between neighboring subunits</note>
    </ligand>
</feature>
<feature type="binding site" evidence="4 8">
    <location>
        <position position="174"/>
    </location>
    <ligand>
        <name>dUMP</name>
        <dbReference type="ChEBI" id="CHEBI:246422"/>
        <note>ligand shared between dimeric partners</note>
    </ligand>
</feature>
<feature type="mutagenesis site" description="Abolishes complementation when expressed in an E.coli thyA deletion mutant." evidence="3">
    <original>S</original>
    <variation>A</variation>
    <location>
        <position position="84"/>
    </location>
</feature>
<feature type="strand" evidence="9">
    <location>
        <begin position="2"/>
        <end position="8"/>
    </location>
</feature>
<feature type="helix" evidence="9">
    <location>
        <begin position="12"/>
        <end position="22"/>
    </location>
</feature>
<feature type="helix" evidence="9">
    <location>
        <begin position="25"/>
        <end position="27"/>
    </location>
</feature>
<feature type="strand" evidence="9">
    <location>
        <begin position="30"/>
        <end position="32"/>
    </location>
</feature>
<feature type="helix" evidence="9">
    <location>
        <begin position="33"/>
        <end position="43"/>
    </location>
</feature>
<feature type="helix" evidence="9">
    <location>
        <begin position="46"/>
        <end position="54"/>
    </location>
</feature>
<feature type="strand" evidence="9">
    <location>
        <begin position="56"/>
        <end position="65"/>
    </location>
</feature>
<feature type="helix" evidence="9">
    <location>
        <begin position="66"/>
        <end position="72"/>
    </location>
</feature>
<feature type="strand" evidence="9">
    <location>
        <begin position="77"/>
        <end position="82"/>
    </location>
</feature>
<feature type="helix" evidence="9">
    <location>
        <begin position="85"/>
        <end position="88"/>
    </location>
</feature>
<feature type="helix" evidence="9">
    <location>
        <begin position="89"/>
        <end position="92"/>
    </location>
</feature>
<feature type="helix" evidence="9">
    <location>
        <begin position="103"/>
        <end position="109"/>
    </location>
</feature>
<feature type="turn" evidence="9">
    <location>
        <begin position="110"/>
        <end position="112"/>
    </location>
</feature>
<feature type="helix" evidence="9">
    <location>
        <begin position="119"/>
        <end position="137"/>
    </location>
</feature>
<feature type="helix" evidence="9">
    <location>
        <begin position="143"/>
        <end position="146"/>
    </location>
</feature>
<feature type="helix" evidence="9">
    <location>
        <begin position="147"/>
        <end position="149"/>
    </location>
</feature>
<feature type="strand" evidence="9">
    <location>
        <begin position="154"/>
        <end position="163"/>
    </location>
</feature>
<feature type="helix" evidence="9">
    <location>
        <begin position="164"/>
        <end position="174"/>
    </location>
</feature>
<feature type="helix" evidence="9">
    <location>
        <begin position="181"/>
        <end position="193"/>
    </location>
</feature>
<feature type="turn" evidence="9">
    <location>
        <begin position="196"/>
        <end position="198"/>
    </location>
</feature>
<feature type="helix" evidence="9">
    <location>
        <begin position="199"/>
        <end position="201"/>
    </location>
</feature>
<feature type="helix" evidence="9">
    <location>
        <begin position="203"/>
        <end position="205"/>
    </location>
</feature>
<feature type="turn" evidence="9">
    <location>
        <begin position="206"/>
        <end position="208"/>
    </location>
</feature>
<sequence>MEVICKHYTPLDIASQAIRTCWQSFEYSDDGGCKDKELIHRVGNIFRHSSTLEHLYYNFEIKGLSRGALQELSRHRIASLSVKSSRYTLRELKEVESFLPLNETNLERAKEFLVFVDNEKVNAMSVLALENLRILLSEHNIKNDLAKYAMPESYKTHLAYSINARSLQNFLTLRSSNKALKEMQDLAKALFDALPGEHQYLFEDCLKH</sequence>
<dbReference type="EC" id="2.1.1.148" evidence="3"/>
<dbReference type="EMBL" id="AE000511">
    <property type="protein sequence ID" value="AAD08571.1"/>
    <property type="status" value="ALT_INIT"/>
    <property type="molecule type" value="Genomic_DNA"/>
</dbReference>
<dbReference type="PIR" id="E64711">
    <property type="entry name" value="E64711"/>
</dbReference>
<dbReference type="RefSeq" id="NP_208323.1">
    <property type="nucleotide sequence ID" value="NC_000915.1"/>
</dbReference>
<dbReference type="RefSeq" id="WP_000451918.1">
    <property type="nucleotide sequence ID" value="NC_018939.1"/>
</dbReference>
<dbReference type="PDB" id="3AH5">
    <property type="method" value="X-ray"/>
    <property type="resolution" value="2.50 A"/>
    <property type="chains" value="A/B/C/D/E/F=1-208"/>
</dbReference>
<dbReference type="PDBsum" id="3AH5"/>
<dbReference type="SMR" id="O26061"/>
<dbReference type="IntAct" id="O26061">
    <property type="interactions" value="12"/>
</dbReference>
<dbReference type="MINT" id="O26061"/>
<dbReference type="STRING" id="85962.HP_1533"/>
<dbReference type="PaxDb" id="85962-C694_07940"/>
<dbReference type="EnsemblBacteria" id="AAD08571">
    <property type="protein sequence ID" value="AAD08571"/>
    <property type="gene ID" value="HP_1533"/>
</dbReference>
<dbReference type="KEGG" id="heo:C694_07940"/>
<dbReference type="KEGG" id="hpy:HP_1533"/>
<dbReference type="PATRIC" id="fig|85962.47.peg.1648"/>
<dbReference type="eggNOG" id="COG1351">
    <property type="taxonomic scope" value="Bacteria"/>
</dbReference>
<dbReference type="InParanoid" id="O26061"/>
<dbReference type="OrthoDB" id="9780625at2"/>
<dbReference type="PhylomeDB" id="O26061"/>
<dbReference type="BioCyc" id="MetaCyc:MONOMER-15768"/>
<dbReference type="BRENDA" id="2.1.1.148">
    <property type="organism ID" value="2604"/>
</dbReference>
<dbReference type="BRENDA" id="2.1.1.45">
    <property type="organism ID" value="2604"/>
</dbReference>
<dbReference type="UniPathway" id="UPA00575"/>
<dbReference type="EvolutionaryTrace" id="O26061"/>
<dbReference type="Proteomes" id="UP000000429">
    <property type="component" value="Chromosome"/>
</dbReference>
<dbReference type="GO" id="GO:0050660">
    <property type="term" value="F:flavin adenine dinucleotide binding"/>
    <property type="evidence" value="ECO:0000318"/>
    <property type="project" value="GO_Central"/>
</dbReference>
<dbReference type="GO" id="GO:0070402">
    <property type="term" value="F:NADPH binding"/>
    <property type="evidence" value="ECO:0000318"/>
    <property type="project" value="GO_Central"/>
</dbReference>
<dbReference type="GO" id="GO:0050797">
    <property type="term" value="F:thymidylate synthase (FAD) activity"/>
    <property type="evidence" value="ECO:0000318"/>
    <property type="project" value="GO_Central"/>
</dbReference>
<dbReference type="GO" id="GO:0004799">
    <property type="term" value="F:thymidylate synthase activity"/>
    <property type="evidence" value="ECO:0000318"/>
    <property type="project" value="GO_Central"/>
</dbReference>
<dbReference type="GO" id="GO:0006231">
    <property type="term" value="P:dTMP biosynthetic process"/>
    <property type="evidence" value="ECO:0000318"/>
    <property type="project" value="GO_Central"/>
</dbReference>
<dbReference type="GO" id="GO:0006235">
    <property type="term" value="P:dTTP biosynthetic process"/>
    <property type="evidence" value="ECO:0007669"/>
    <property type="project" value="UniProtKB-UniRule"/>
</dbReference>
<dbReference type="GO" id="GO:0032259">
    <property type="term" value="P:methylation"/>
    <property type="evidence" value="ECO:0007669"/>
    <property type="project" value="UniProtKB-KW"/>
</dbReference>
<dbReference type="CDD" id="cd20175">
    <property type="entry name" value="ThyX"/>
    <property type="match status" value="1"/>
</dbReference>
<dbReference type="FunFam" id="3.30.1360.170:FF:000005">
    <property type="entry name" value="Flavin-dependent thymidylate synthase"/>
    <property type="match status" value="1"/>
</dbReference>
<dbReference type="Gene3D" id="3.30.1360.170">
    <property type="match status" value="1"/>
</dbReference>
<dbReference type="HAMAP" id="MF_01408">
    <property type="entry name" value="ThyX"/>
    <property type="match status" value="1"/>
</dbReference>
<dbReference type="InterPro" id="IPR003669">
    <property type="entry name" value="Thymidylate_synthase_ThyX"/>
</dbReference>
<dbReference type="InterPro" id="IPR036098">
    <property type="entry name" value="Thymidylate_synthase_ThyX_sf"/>
</dbReference>
<dbReference type="NCBIfam" id="TIGR02170">
    <property type="entry name" value="thyX"/>
    <property type="match status" value="1"/>
</dbReference>
<dbReference type="PANTHER" id="PTHR34934">
    <property type="entry name" value="FLAVIN-DEPENDENT THYMIDYLATE SYNTHASE"/>
    <property type="match status" value="1"/>
</dbReference>
<dbReference type="PANTHER" id="PTHR34934:SF1">
    <property type="entry name" value="FLAVIN-DEPENDENT THYMIDYLATE SYNTHASE"/>
    <property type="match status" value="1"/>
</dbReference>
<dbReference type="Pfam" id="PF02511">
    <property type="entry name" value="Thy1"/>
    <property type="match status" value="1"/>
</dbReference>
<dbReference type="SUPFAM" id="SSF69796">
    <property type="entry name" value="Thymidylate synthase-complementing protein Thy1"/>
    <property type="match status" value="1"/>
</dbReference>
<dbReference type="PROSITE" id="PS51331">
    <property type="entry name" value="THYX"/>
    <property type="match status" value="1"/>
</dbReference>
<name>THYX_HELPY</name>
<organism>
    <name type="scientific">Helicobacter pylori (strain ATCC 700392 / 26695)</name>
    <name type="common">Campylobacter pylori</name>
    <dbReference type="NCBI Taxonomy" id="85962"/>
    <lineage>
        <taxon>Bacteria</taxon>
        <taxon>Pseudomonadati</taxon>
        <taxon>Campylobacterota</taxon>
        <taxon>Epsilonproteobacteria</taxon>
        <taxon>Campylobacterales</taxon>
        <taxon>Helicobacteraceae</taxon>
        <taxon>Helicobacter</taxon>
    </lineage>
</organism>
<reference key="1">
    <citation type="journal article" date="1997" name="Nature">
        <title>The complete genome sequence of the gastric pathogen Helicobacter pylori.</title>
        <authorList>
            <person name="Tomb J.-F."/>
            <person name="White O."/>
            <person name="Kerlavage A.R."/>
            <person name="Clayton R.A."/>
            <person name="Sutton G.G."/>
            <person name="Fleischmann R.D."/>
            <person name="Ketchum K.A."/>
            <person name="Klenk H.-P."/>
            <person name="Gill S.R."/>
            <person name="Dougherty B.A."/>
            <person name="Nelson K.E."/>
            <person name="Quackenbush J."/>
            <person name="Zhou L."/>
            <person name="Kirkness E.F."/>
            <person name="Peterson S.N."/>
            <person name="Loftus B.J."/>
            <person name="Richardson D.L."/>
            <person name="Dodson R.J."/>
            <person name="Khalak H.G."/>
            <person name="Glodek A."/>
            <person name="McKenney K."/>
            <person name="FitzGerald L.M."/>
            <person name="Lee N."/>
            <person name="Adams M.D."/>
            <person name="Hickey E.K."/>
            <person name="Berg D.E."/>
            <person name="Gocayne J.D."/>
            <person name="Utterback T.R."/>
            <person name="Peterson J.D."/>
            <person name="Kelley J.M."/>
            <person name="Cotton M.D."/>
            <person name="Weidman J.F."/>
            <person name="Fujii C."/>
            <person name="Bowman C."/>
            <person name="Watthey L."/>
            <person name="Wallin E."/>
            <person name="Hayes W.S."/>
            <person name="Borodovsky M."/>
            <person name="Karp P.D."/>
            <person name="Smith H.O."/>
            <person name="Fraser C.M."/>
            <person name="Venter J.C."/>
        </authorList>
    </citation>
    <scope>NUCLEOTIDE SEQUENCE [LARGE SCALE GENOMIC DNA]</scope>
    <source>
        <strain>ATCC 700392 / 26695</strain>
    </source>
</reference>
<reference key="2">
    <citation type="journal article" date="2002" name="Science">
        <title>An alternative flavin-dependent mechanism for thymidylate synthesis.</title>
        <authorList>
            <person name="Myllykallio H."/>
            <person name="Lipowski G."/>
            <person name="Leduc D."/>
            <person name="Filee J."/>
            <person name="Forterre P."/>
            <person name="Liebl U."/>
        </authorList>
    </citation>
    <scope>FUNCTION</scope>
    <scope>CATALYTIC ACTIVITY</scope>
    <scope>COFACTOR</scope>
    <scope>SUBUNIT</scope>
    <scope>MUTAGENESIS OF SER-84</scope>
</reference>
<reference key="3">
    <citation type="journal article" date="2012" name="Protein Pept. Lett.">
        <title>Crystal structure of a flavin-dependent thymidylate synthase from Helicobacter pylori strain 26695.</title>
        <authorList>
            <person name="Zhang X."/>
            <person name="Zhang J."/>
            <person name="Guo G."/>
            <person name="Mao X."/>
            <person name="Hu Y."/>
            <person name="Zou Q."/>
        </authorList>
    </citation>
    <scope>X-RAY CRYSTALLOGRAPHY (2.50 ANGSTROMS) IN COMPLEX WITH FAD AND DUMP</scope>
    <scope>COFACTOR</scope>
    <source>
        <strain>ATCC 700392 / 26695</strain>
    </source>
</reference>
<evidence type="ECO:0000255" key="1">
    <source>
        <dbReference type="HAMAP-Rule" id="MF_01408"/>
    </source>
</evidence>
<evidence type="ECO:0000255" key="2">
    <source>
        <dbReference type="PROSITE-ProRule" id="PRU00661"/>
    </source>
</evidence>
<evidence type="ECO:0000269" key="3">
    <source>
    </source>
</evidence>
<evidence type="ECO:0000269" key="4">
    <source>
    </source>
</evidence>
<evidence type="ECO:0000303" key="5">
    <source>
    </source>
</evidence>
<evidence type="ECO:0000305" key="6"/>
<evidence type="ECO:0000305" key="7">
    <source>
    </source>
</evidence>
<evidence type="ECO:0007744" key="8">
    <source>
        <dbReference type="PDB" id="3AH5"/>
    </source>
</evidence>
<evidence type="ECO:0007829" key="9">
    <source>
        <dbReference type="PDB" id="3AH5"/>
    </source>
</evidence>
<comment type="function">
    <text evidence="3">Catalyzes the reductive methylation of 2'-deoxyuridine-5'-monophosphate (dUMP) to 2'-deoxythymidine-5'-monophosphate (dTMP) while utilizing 5,10-methylenetetrahydrofolate (mTHF) as the methyl donor, and NAD(P)H and FADH(2) as the reductant.</text>
</comment>
<comment type="catalytic activity">
    <reaction evidence="3">
        <text>dUMP + (6R)-5,10-methylene-5,6,7,8-tetrahydrofolate + NADPH + H(+) = dTMP + (6S)-5,6,7,8-tetrahydrofolate + NADP(+)</text>
        <dbReference type="Rhea" id="RHEA:29043"/>
        <dbReference type="ChEBI" id="CHEBI:15378"/>
        <dbReference type="ChEBI" id="CHEBI:15636"/>
        <dbReference type="ChEBI" id="CHEBI:57453"/>
        <dbReference type="ChEBI" id="CHEBI:57783"/>
        <dbReference type="ChEBI" id="CHEBI:58349"/>
        <dbReference type="ChEBI" id="CHEBI:63528"/>
        <dbReference type="ChEBI" id="CHEBI:246422"/>
        <dbReference type="EC" id="2.1.1.148"/>
    </reaction>
</comment>
<comment type="cofactor">
    <cofactor evidence="4 7">
        <name>FAD</name>
        <dbReference type="ChEBI" id="CHEBI:57692"/>
    </cofactor>
    <text evidence="4">Binds 4 FAD per tetramer. Each FAD binding site is formed by three monomers.</text>
</comment>
<comment type="pathway">
    <text evidence="1">Pyrimidine metabolism; dTTP biosynthesis.</text>
</comment>
<comment type="subunit">
    <text evidence="3">Homotetramer.</text>
</comment>
<comment type="miscellaneous">
    <text>ThyX activity is mechanistically distinct from ThyA activity.</text>
</comment>
<comment type="similarity">
    <text evidence="1">Belongs to the thymidylate synthase ThyX family.</text>
</comment>
<comment type="sequence caution" evidence="6">
    <conflict type="erroneous initiation">
        <sequence resource="EMBL-CDS" id="AAD08571"/>
    </conflict>
    <text>Extended N-terminus.</text>
</comment>
<gene>
    <name evidence="5" type="primary">thyX</name>
    <name type="ordered locus">HP_1533</name>
</gene>
<protein>
    <recommendedName>
        <fullName evidence="5">Flavin-dependent thymidylate synthase</fullName>
        <shortName evidence="1">FDTS</shortName>
        <ecNumber evidence="3">2.1.1.148</ecNumber>
    </recommendedName>
    <alternativeName>
        <fullName evidence="1">FAD-dependent thymidylate synthase</fullName>
    </alternativeName>
    <alternativeName>
        <fullName evidence="5">Thymidylate synthase ThyX</fullName>
        <shortName evidence="1">TS</shortName>
        <shortName evidence="1">TSase</shortName>
    </alternativeName>
</protein>
<accession>O26061</accession>
<keyword id="KW-0002">3D-structure</keyword>
<keyword id="KW-0274">FAD</keyword>
<keyword id="KW-0285">Flavoprotein</keyword>
<keyword id="KW-0489">Methyltransferase</keyword>
<keyword id="KW-0521">NADP</keyword>
<keyword id="KW-0545">Nucleotide biosynthesis</keyword>
<keyword id="KW-1185">Reference proteome</keyword>
<keyword id="KW-0808">Transferase</keyword>